<protein>
    <recommendedName>
        <fullName>Putative F-box protein At1g77650</fullName>
    </recommendedName>
</protein>
<dbReference type="EMBL" id="AC010704">
    <property type="protein sequence ID" value="AAG51665.1"/>
    <property type="molecule type" value="Genomic_DNA"/>
</dbReference>
<dbReference type="EMBL" id="CP002684">
    <property type="protein sequence ID" value="AEE36004.1"/>
    <property type="molecule type" value="Genomic_DNA"/>
</dbReference>
<dbReference type="PIR" id="B96806">
    <property type="entry name" value="B96806"/>
</dbReference>
<dbReference type="RefSeq" id="NP_177888.1">
    <property type="nucleotide sequence ID" value="NM_106413.1"/>
</dbReference>
<dbReference type="SMR" id="Q9CAP3"/>
<dbReference type="STRING" id="3702.Q9CAP3"/>
<dbReference type="iPTMnet" id="Q9CAP3"/>
<dbReference type="PaxDb" id="3702-AT1G77650.1"/>
<dbReference type="EnsemblPlants" id="AT1G77650.1">
    <property type="protein sequence ID" value="AT1G77650.1"/>
    <property type="gene ID" value="AT1G77650"/>
</dbReference>
<dbReference type="GeneID" id="844100"/>
<dbReference type="Gramene" id="AT1G77650.1">
    <property type="protein sequence ID" value="AT1G77650.1"/>
    <property type="gene ID" value="AT1G77650"/>
</dbReference>
<dbReference type="KEGG" id="ath:AT1G77650"/>
<dbReference type="Araport" id="AT1G77650"/>
<dbReference type="TAIR" id="AT1G77650"/>
<dbReference type="HOGENOM" id="CLU_034692_2_0_1"/>
<dbReference type="InParanoid" id="Q9CAP3"/>
<dbReference type="OMA" id="CETSSWR"/>
<dbReference type="PhylomeDB" id="Q9CAP3"/>
<dbReference type="PRO" id="PR:Q9CAP3"/>
<dbReference type="Proteomes" id="UP000006548">
    <property type="component" value="Chromosome 1"/>
</dbReference>
<dbReference type="ExpressionAtlas" id="Q9CAP3">
    <property type="expression patterns" value="baseline and differential"/>
</dbReference>
<dbReference type="InterPro" id="IPR006527">
    <property type="entry name" value="F-box-assoc_dom_typ1"/>
</dbReference>
<dbReference type="InterPro" id="IPR017451">
    <property type="entry name" value="F-box-assoc_interact_dom"/>
</dbReference>
<dbReference type="InterPro" id="IPR036047">
    <property type="entry name" value="F-box-like_dom_sf"/>
</dbReference>
<dbReference type="InterPro" id="IPR050796">
    <property type="entry name" value="SCF_F-box_component"/>
</dbReference>
<dbReference type="NCBIfam" id="TIGR01640">
    <property type="entry name" value="F_box_assoc_1"/>
    <property type="match status" value="1"/>
</dbReference>
<dbReference type="PANTHER" id="PTHR31672">
    <property type="entry name" value="BNACNNG10540D PROTEIN"/>
    <property type="match status" value="1"/>
</dbReference>
<dbReference type="PANTHER" id="PTHR31672:SF13">
    <property type="entry name" value="F-BOX PROTEIN CPR30-LIKE"/>
    <property type="match status" value="1"/>
</dbReference>
<dbReference type="Pfam" id="PF07734">
    <property type="entry name" value="FBA_1"/>
    <property type="match status" value="1"/>
</dbReference>
<dbReference type="SUPFAM" id="SSF81383">
    <property type="entry name" value="F-box domain"/>
    <property type="match status" value="1"/>
</dbReference>
<gene>
    <name type="ordered locus">At1g77650</name>
    <name type="ORF">T5M16.24</name>
</gene>
<feature type="chain" id="PRO_0000283362" description="Putative F-box protein At1g77650">
    <location>
        <begin position="1"/>
        <end position="383"/>
    </location>
</feature>
<feature type="domain" description="F-box">
    <location>
        <begin position="1"/>
        <end position="47"/>
    </location>
</feature>
<sequence length="383" mass="44778">MAFLSLPSDVVEEFLFKTPIESLVLCKPTCKQLYALCNDKRFIYNHLDLSEERLMRIYLDKIKIINPVTLDILCLPVPAEFDSVTFNVIHCDGLLLCRWTTRGLDRYNKLAVWNPISGQLKFVESFFHGVTDLYGFGYANNGPRDSYKILRVSYWRKECEIYDLKSKLWRAFSATLDWVVNTPQQNVFMNGNMYWIADTLGDNIRETFIQSFDFSKETFKPICSFPYENKIIDTLIMNGIHRIADSVILSSFRVDRLSLFRQQRLEDKKYEMEVWVTNKVTDEVVSWTKYFNVTHHPDLPILNPYLFTYMRVPTFFIHETNSIMLWCDKAAGKGFACTSFYEIGDQGEVKHQLETRKRFRANGERNSCVSSCVYVPSLVPIPE</sequence>
<keyword id="KW-1185">Reference proteome</keyword>
<organism>
    <name type="scientific">Arabidopsis thaliana</name>
    <name type="common">Mouse-ear cress</name>
    <dbReference type="NCBI Taxonomy" id="3702"/>
    <lineage>
        <taxon>Eukaryota</taxon>
        <taxon>Viridiplantae</taxon>
        <taxon>Streptophyta</taxon>
        <taxon>Embryophyta</taxon>
        <taxon>Tracheophyta</taxon>
        <taxon>Spermatophyta</taxon>
        <taxon>Magnoliopsida</taxon>
        <taxon>eudicotyledons</taxon>
        <taxon>Gunneridae</taxon>
        <taxon>Pentapetalae</taxon>
        <taxon>rosids</taxon>
        <taxon>malvids</taxon>
        <taxon>Brassicales</taxon>
        <taxon>Brassicaceae</taxon>
        <taxon>Camelineae</taxon>
        <taxon>Arabidopsis</taxon>
    </lineage>
</organism>
<accession>Q9CAP3</accession>
<name>FB89_ARATH</name>
<proteinExistence type="predicted"/>
<reference key="1">
    <citation type="journal article" date="2000" name="Nature">
        <title>Sequence and analysis of chromosome 1 of the plant Arabidopsis thaliana.</title>
        <authorList>
            <person name="Theologis A."/>
            <person name="Ecker J.R."/>
            <person name="Palm C.J."/>
            <person name="Federspiel N.A."/>
            <person name="Kaul S."/>
            <person name="White O."/>
            <person name="Alonso J."/>
            <person name="Altafi H."/>
            <person name="Araujo R."/>
            <person name="Bowman C.L."/>
            <person name="Brooks S.Y."/>
            <person name="Buehler E."/>
            <person name="Chan A."/>
            <person name="Chao Q."/>
            <person name="Chen H."/>
            <person name="Cheuk R.F."/>
            <person name="Chin C.W."/>
            <person name="Chung M.K."/>
            <person name="Conn L."/>
            <person name="Conway A.B."/>
            <person name="Conway A.R."/>
            <person name="Creasy T.H."/>
            <person name="Dewar K."/>
            <person name="Dunn P."/>
            <person name="Etgu P."/>
            <person name="Feldblyum T.V."/>
            <person name="Feng J.-D."/>
            <person name="Fong B."/>
            <person name="Fujii C.Y."/>
            <person name="Gill J.E."/>
            <person name="Goldsmith A.D."/>
            <person name="Haas B."/>
            <person name="Hansen N.F."/>
            <person name="Hughes B."/>
            <person name="Huizar L."/>
            <person name="Hunter J.L."/>
            <person name="Jenkins J."/>
            <person name="Johnson-Hopson C."/>
            <person name="Khan S."/>
            <person name="Khaykin E."/>
            <person name="Kim C.J."/>
            <person name="Koo H.L."/>
            <person name="Kremenetskaia I."/>
            <person name="Kurtz D.B."/>
            <person name="Kwan A."/>
            <person name="Lam B."/>
            <person name="Langin-Hooper S."/>
            <person name="Lee A."/>
            <person name="Lee J.M."/>
            <person name="Lenz C.A."/>
            <person name="Li J.H."/>
            <person name="Li Y.-P."/>
            <person name="Lin X."/>
            <person name="Liu S.X."/>
            <person name="Liu Z.A."/>
            <person name="Luros J.S."/>
            <person name="Maiti R."/>
            <person name="Marziali A."/>
            <person name="Militscher J."/>
            <person name="Miranda M."/>
            <person name="Nguyen M."/>
            <person name="Nierman W.C."/>
            <person name="Osborne B.I."/>
            <person name="Pai G."/>
            <person name="Peterson J."/>
            <person name="Pham P.K."/>
            <person name="Rizzo M."/>
            <person name="Rooney T."/>
            <person name="Rowley D."/>
            <person name="Sakano H."/>
            <person name="Salzberg S.L."/>
            <person name="Schwartz J.R."/>
            <person name="Shinn P."/>
            <person name="Southwick A.M."/>
            <person name="Sun H."/>
            <person name="Tallon L.J."/>
            <person name="Tambunga G."/>
            <person name="Toriumi M.J."/>
            <person name="Town C.D."/>
            <person name="Utterback T."/>
            <person name="Van Aken S."/>
            <person name="Vaysberg M."/>
            <person name="Vysotskaia V.S."/>
            <person name="Walker M."/>
            <person name="Wu D."/>
            <person name="Yu G."/>
            <person name="Fraser C.M."/>
            <person name="Venter J.C."/>
            <person name="Davis R.W."/>
        </authorList>
    </citation>
    <scope>NUCLEOTIDE SEQUENCE [LARGE SCALE GENOMIC DNA]</scope>
    <source>
        <strain>cv. Columbia</strain>
    </source>
</reference>
<reference key="2">
    <citation type="journal article" date="2017" name="Plant J.">
        <title>Araport11: a complete reannotation of the Arabidopsis thaliana reference genome.</title>
        <authorList>
            <person name="Cheng C.Y."/>
            <person name="Krishnakumar V."/>
            <person name="Chan A.P."/>
            <person name="Thibaud-Nissen F."/>
            <person name="Schobel S."/>
            <person name="Town C.D."/>
        </authorList>
    </citation>
    <scope>GENOME REANNOTATION</scope>
    <source>
        <strain>cv. Columbia</strain>
    </source>
</reference>